<keyword id="KW-0067">ATP-binding</keyword>
<keyword id="KW-0963">Cytoplasm</keyword>
<keyword id="KW-0436">Ligase</keyword>
<keyword id="KW-0547">Nucleotide-binding</keyword>
<keyword id="KW-1185">Reference proteome</keyword>
<organism>
    <name type="scientific">Caldivirga maquilingensis (strain ATCC 700844 / DSM 13496 / JCM 10307 / IC-167)</name>
    <dbReference type="NCBI Taxonomy" id="397948"/>
    <lineage>
        <taxon>Archaea</taxon>
        <taxon>Thermoproteota</taxon>
        <taxon>Thermoprotei</taxon>
        <taxon>Thermoproteales</taxon>
        <taxon>Thermoproteaceae</taxon>
        <taxon>Caldivirga</taxon>
    </lineage>
</organism>
<evidence type="ECO:0000255" key="1">
    <source>
        <dbReference type="HAMAP-Rule" id="MF_00200"/>
    </source>
</evidence>
<dbReference type="EC" id="6.5.1.4" evidence="1"/>
<dbReference type="EMBL" id="CP000852">
    <property type="protein sequence ID" value="ABW01143.1"/>
    <property type="molecule type" value="Genomic_DNA"/>
</dbReference>
<dbReference type="RefSeq" id="WP_012185363.1">
    <property type="nucleotide sequence ID" value="NC_009954.1"/>
</dbReference>
<dbReference type="SMR" id="A8MAV7"/>
<dbReference type="STRING" id="397948.Cmaq_0295"/>
<dbReference type="GeneID" id="5708793"/>
<dbReference type="KEGG" id="cma:Cmaq_0295"/>
<dbReference type="eggNOG" id="arCOG04125">
    <property type="taxonomic scope" value="Archaea"/>
</dbReference>
<dbReference type="HOGENOM" id="CLU_027882_0_0_2"/>
<dbReference type="OrthoDB" id="7994at2157"/>
<dbReference type="Proteomes" id="UP000001137">
    <property type="component" value="Chromosome"/>
</dbReference>
<dbReference type="GO" id="GO:0005737">
    <property type="term" value="C:cytoplasm"/>
    <property type="evidence" value="ECO:0007669"/>
    <property type="project" value="UniProtKB-SubCell"/>
</dbReference>
<dbReference type="GO" id="GO:0005524">
    <property type="term" value="F:ATP binding"/>
    <property type="evidence" value="ECO:0007669"/>
    <property type="project" value="UniProtKB-KW"/>
</dbReference>
<dbReference type="GO" id="GO:0003963">
    <property type="term" value="F:RNA-3'-phosphate cyclase activity"/>
    <property type="evidence" value="ECO:0007669"/>
    <property type="project" value="UniProtKB-UniRule"/>
</dbReference>
<dbReference type="GO" id="GO:0006396">
    <property type="term" value="P:RNA processing"/>
    <property type="evidence" value="ECO:0007669"/>
    <property type="project" value="InterPro"/>
</dbReference>
<dbReference type="CDD" id="cd00874">
    <property type="entry name" value="RNA_Cyclase_Class_II"/>
    <property type="match status" value="1"/>
</dbReference>
<dbReference type="FunFam" id="3.30.360.20:FF:000002">
    <property type="entry name" value="RNA terminal phosphate cyclase-like 1"/>
    <property type="match status" value="1"/>
</dbReference>
<dbReference type="Gene3D" id="3.65.10.20">
    <property type="entry name" value="RNA 3'-terminal phosphate cyclase domain"/>
    <property type="match status" value="1"/>
</dbReference>
<dbReference type="Gene3D" id="3.30.360.20">
    <property type="entry name" value="RNA 3'-terminal phosphate cyclase, insert domain"/>
    <property type="match status" value="1"/>
</dbReference>
<dbReference type="HAMAP" id="MF_00200">
    <property type="entry name" value="RTC"/>
    <property type="match status" value="1"/>
</dbReference>
<dbReference type="InterPro" id="IPR013791">
    <property type="entry name" value="RNA3'-term_phos_cycl_insert"/>
</dbReference>
<dbReference type="InterPro" id="IPR023797">
    <property type="entry name" value="RNA3'_phos_cyclase_dom"/>
</dbReference>
<dbReference type="InterPro" id="IPR037136">
    <property type="entry name" value="RNA3'_phos_cyclase_dom_sf"/>
</dbReference>
<dbReference type="InterPro" id="IPR000228">
    <property type="entry name" value="RNA3'_term_phos_cyc"/>
</dbReference>
<dbReference type="InterPro" id="IPR017770">
    <property type="entry name" value="RNA3'_term_phos_cyc_type_1"/>
</dbReference>
<dbReference type="InterPro" id="IPR020719">
    <property type="entry name" value="RNA3'_term_phos_cycl-like_CS"/>
</dbReference>
<dbReference type="InterPro" id="IPR013792">
    <property type="entry name" value="RNA3'P_cycl/enolpyr_Trfase_a/b"/>
</dbReference>
<dbReference type="InterPro" id="IPR036553">
    <property type="entry name" value="RPTC_insert"/>
</dbReference>
<dbReference type="NCBIfam" id="NF003246">
    <property type="entry name" value="PRK04204.1-2"/>
    <property type="match status" value="1"/>
</dbReference>
<dbReference type="NCBIfam" id="TIGR03399">
    <property type="entry name" value="RNA_3prim_cycl"/>
    <property type="match status" value="1"/>
</dbReference>
<dbReference type="PANTHER" id="PTHR11096">
    <property type="entry name" value="RNA 3' TERMINAL PHOSPHATE CYCLASE"/>
    <property type="match status" value="1"/>
</dbReference>
<dbReference type="PANTHER" id="PTHR11096:SF0">
    <property type="entry name" value="RNA 3'-TERMINAL PHOSPHATE CYCLASE"/>
    <property type="match status" value="1"/>
</dbReference>
<dbReference type="Pfam" id="PF01137">
    <property type="entry name" value="RTC"/>
    <property type="match status" value="1"/>
</dbReference>
<dbReference type="Pfam" id="PF05189">
    <property type="entry name" value="RTC_insert"/>
    <property type="match status" value="1"/>
</dbReference>
<dbReference type="PIRSF" id="PIRSF005378">
    <property type="entry name" value="RNA3'_term_phos_cycl_euk"/>
    <property type="match status" value="1"/>
</dbReference>
<dbReference type="SUPFAM" id="SSF55205">
    <property type="entry name" value="EPT/RTPC-like"/>
    <property type="match status" value="1"/>
</dbReference>
<dbReference type="SUPFAM" id="SSF52913">
    <property type="entry name" value="RNA 3'-terminal phosphate cyclase, RPTC, insert domain"/>
    <property type="match status" value="1"/>
</dbReference>
<dbReference type="PROSITE" id="PS01287">
    <property type="entry name" value="RTC"/>
    <property type="match status" value="1"/>
</dbReference>
<reference key="1">
    <citation type="submission" date="2007-10" db="EMBL/GenBank/DDBJ databases">
        <title>Complete sequence of Caldivirga maquilingensis IC-167.</title>
        <authorList>
            <consortium name="US DOE Joint Genome Institute"/>
            <person name="Copeland A."/>
            <person name="Lucas S."/>
            <person name="Lapidus A."/>
            <person name="Barry K."/>
            <person name="Glavina del Rio T."/>
            <person name="Dalin E."/>
            <person name="Tice H."/>
            <person name="Pitluck S."/>
            <person name="Saunders E."/>
            <person name="Brettin T."/>
            <person name="Bruce D."/>
            <person name="Detter J.C."/>
            <person name="Han C."/>
            <person name="Schmutz J."/>
            <person name="Larimer F."/>
            <person name="Land M."/>
            <person name="Hauser L."/>
            <person name="Kyrpides N."/>
            <person name="Ivanova N."/>
            <person name="Biddle J.F."/>
            <person name="Zhang Z."/>
            <person name="Fitz-Gibbon S.T."/>
            <person name="Lowe T.M."/>
            <person name="Saltikov C."/>
            <person name="House C.H."/>
            <person name="Richardson P."/>
        </authorList>
    </citation>
    <scope>NUCLEOTIDE SEQUENCE [LARGE SCALE GENOMIC DNA]</scope>
    <source>
        <strain>ATCC 700844 / DSM 13496 / JCM 10307 / IC-167</strain>
    </source>
</reference>
<gene>
    <name evidence="1" type="primary">rtcA</name>
    <name type="ordered locus">Cmaq_0295</name>
</gene>
<accession>A8MAV7</accession>
<sequence>MITIDGSMGEGGGQILRTALALSIITGKPFRIINIRARRSNPGLQPQHLASVMAAARISNAKVDGAYKGSLSLTFEPGDVKCGDYSIDIGTAGSISLVLQTLLPVLAVVNCGEVTLDITGGTDVPKAPPIDYVRFVLAHNLSLMGVGIKVELIRRGHYPRGGGKVKVTVKPAGRLKPINITELGELKGIWGLSHAVRLPSHVAVRQAKAAEDYLSKLGLKPSISLEYYEQGKDPHLGPGSGITLWAESTNGQRIGADSLGERGKPAEDVGREAAEALAAVINAGAAFDDHMGDMLIPFLALAEGRSEYTVVNLTSHLSTNISIVKLFLNANIETMNYNKKVKVTINPITAPRKP</sequence>
<feature type="chain" id="PRO_1000099345" description="RNA 3'-terminal phosphate cyclase">
    <location>
        <begin position="1"/>
        <end position="354"/>
    </location>
</feature>
<feature type="active site" description="Tele-AMP-histidine intermediate" evidence="1">
    <location>
        <position position="316"/>
    </location>
</feature>
<feature type="binding site" evidence="1">
    <location>
        <position position="100"/>
    </location>
    <ligand>
        <name>ATP</name>
        <dbReference type="ChEBI" id="CHEBI:30616"/>
    </ligand>
</feature>
<feature type="binding site" evidence="1">
    <location>
        <begin position="290"/>
        <end position="293"/>
    </location>
    <ligand>
        <name>ATP</name>
        <dbReference type="ChEBI" id="CHEBI:30616"/>
    </ligand>
</feature>
<proteinExistence type="inferred from homology"/>
<protein>
    <recommendedName>
        <fullName evidence="1">RNA 3'-terminal phosphate cyclase</fullName>
        <shortName evidence="1">RNA cyclase</shortName>
        <shortName evidence="1">RNA-3'-phosphate cyclase</shortName>
        <ecNumber evidence="1">6.5.1.4</ecNumber>
    </recommendedName>
</protein>
<comment type="function">
    <text evidence="1">Catalyzes the conversion of 3'-phosphate to a 2',3'-cyclic phosphodiester at the end of RNA. The mechanism of action of the enzyme occurs in 3 steps: (A) adenylation of the enzyme by ATP; (B) transfer of adenylate to an RNA-N3'P to produce RNA-N3'PP5'A; (C) and attack of the adjacent 2'-hydroxyl on the 3'-phosphorus in the diester linkage to produce the cyclic end product. The biological role of this enzyme is unknown but it is likely to function in some aspects of cellular RNA processing.</text>
</comment>
<comment type="catalytic activity">
    <reaction evidence="1">
        <text>a 3'-end 3'-phospho-ribonucleotide-RNA + ATP = a 3'-end 2',3'-cyclophospho-ribonucleotide-RNA + AMP + diphosphate</text>
        <dbReference type="Rhea" id="RHEA:23976"/>
        <dbReference type="Rhea" id="RHEA-COMP:10463"/>
        <dbReference type="Rhea" id="RHEA-COMP:10464"/>
        <dbReference type="ChEBI" id="CHEBI:30616"/>
        <dbReference type="ChEBI" id="CHEBI:33019"/>
        <dbReference type="ChEBI" id="CHEBI:83062"/>
        <dbReference type="ChEBI" id="CHEBI:83064"/>
        <dbReference type="ChEBI" id="CHEBI:456215"/>
        <dbReference type="EC" id="6.5.1.4"/>
    </reaction>
</comment>
<comment type="subcellular location">
    <subcellularLocation>
        <location evidence="1">Cytoplasm</location>
    </subcellularLocation>
</comment>
<comment type="similarity">
    <text evidence="1">Belongs to the RNA 3'-terminal cyclase family. Type 1 subfamily.</text>
</comment>
<name>RTCA_CALMQ</name>